<name>SCED_STAAB</name>
<proteinExistence type="inferred from homology"/>
<comment type="function">
    <text evidence="1">Is able to cleave peptidoglycan and affects clumping and separation of bacterial cells.</text>
</comment>
<comment type="subcellular location">
    <subcellularLocation>
        <location evidence="1">Secreted</location>
    </subcellularLocation>
</comment>
<comment type="induction">
    <text evidence="1">Positively regulated by sigma B factor.</text>
</comment>
<comment type="similarity">
    <text evidence="4">Belongs to the transglycosylase family. SceD subfamily.</text>
</comment>
<accession>Q2YUK8</accession>
<keyword id="KW-0326">Glycosidase</keyword>
<keyword id="KW-0378">Hydrolase</keyword>
<keyword id="KW-0964">Secreted</keyword>
<keyword id="KW-0732">Signal</keyword>
<reference key="1">
    <citation type="journal article" date="2007" name="PLoS ONE">
        <title>Molecular correlates of host specialization in Staphylococcus aureus.</title>
        <authorList>
            <person name="Herron-Olson L."/>
            <person name="Fitzgerald J.R."/>
            <person name="Musser J.M."/>
            <person name="Kapur V."/>
        </authorList>
    </citation>
    <scope>NUCLEOTIDE SEQUENCE [LARGE SCALE GENOMIC DNA]</scope>
    <source>
        <strain>bovine RF122 / ET3-1</strain>
    </source>
</reference>
<dbReference type="EC" id="3.2.-.-"/>
<dbReference type="EMBL" id="AJ938182">
    <property type="protein sequence ID" value="CAI81669.1"/>
    <property type="molecule type" value="Genomic_DNA"/>
</dbReference>
<dbReference type="RefSeq" id="WP_000751995.1">
    <property type="nucleotide sequence ID" value="NC_007622.1"/>
</dbReference>
<dbReference type="SMR" id="Q2YUK8"/>
<dbReference type="KEGG" id="sab:SAB1980c"/>
<dbReference type="HOGENOM" id="CLU_099865_0_0_9"/>
<dbReference type="GO" id="GO:0005576">
    <property type="term" value="C:extracellular region"/>
    <property type="evidence" value="ECO:0007669"/>
    <property type="project" value="UniProtKB-SubCell"/>
</dbReference>
<dbReference type="GO" id="GO:0016798">
    <property type="term" value="F:hydrolase activity, acting on glycosyl bonds"/>
    <property type="evidence" value="ECO:0007669"/>
    <property type="project" value="UniProtKB-KW"/>
</dbReference>
<dbReference type="CDD" id="cd13925">
    <property type="entry name" value="RPF"/>
    <property type="match status" value="1"/>
</dbReference>
<dbReference type="Gene3D" id="1.10.530.10">
    <property type="match status" value="1"/>
</dbReference>
<dbReference type="InterPro" id="IPR023346">
    <property type="entry name" value="Lysozyme-like_dom_sf"/>
</dbReference>
<dbReference type="InterPro" id="IPR010618">
    <property type="entry name" value="RPF"/>
</dbReference>
<dbReference type="Pfam" id="PF06737">
    <property type="entry name" value="Transglycosylas"/>
    <property type="match status" value="1"/>
</dbReference>
<dbReference type="SUPFAM" id="SSF53955">
    <property type="entry name" value="Lysozyme-like"/>
    <property type="match status" value="1"/>
</dbReference>
<feature type="signal peptide" evidence="2">
    <location>
        <begin position="1"/>
        <end position="27"/>
    </location>
</feature>
<feature type="chain" id="PRO_0000320310" description="Probable transglycosylase SceD">
    <location>
        <begin position="28"/>
        <end position="231"/>
    </location>
</feature>
<feature type="region of interest" description="Disordered" evidence="3">
    <location>
        <begin position="93"/>
        <end position="153"/>
    </location>
</feature>
<feature type="compositionally biased region" description="Polar residues" evidence="3">
    <location>
        <begin position="96"/>
        <end position="116"/>
    </location>
</feature>
<feature type="compositionally biased region" description="Low complexity" evidence="3">
    <location>
        <begin position="119"/>
        <end position="137"/>
    </location>
</feature>
<feature type="compositionally biased region" description="Polar residues" evidence="3">
    <location>
        <begin position="138"/>
        <end position="153"/>
    </location>
</feature>
<gene>
    <name type="primary">sceD</name>
    <name type="ordered locus">SAB1980c</name>
</gene>
<protein>
    <recommendedName>
        <fullName>Probable transglycosylase SceD</fullName>
        <ecNumber>3.2.-.-</ecNumber>
    </recommendedName>
</protein>
<sequence length="231" mass="24080">MKKTLLASSLAVGLGIVAGNAGHEAHASEADLNKASLAQMAQSNDQTLNQKPIEAGAYNYTFDYEGFTYHFESDGTHFAWNYHATGANGADMSAQAPATNNVAPSADQANQVQSQEVEAPQNAQTQQPQASTSNNSQVTATPTESKASEGSSVNVNDHLKQIAQRESGGNIHAVNPTSGAAGKYQFLQSTWDSVAPAKYKGVSPANAPESVQDAAAVKLYNTGGAGHWVTA</sequence>
<organism>
    <name type="scientific">Staphylococcus aureus (strain bovine RF122 / ET3-1)</name>
    <dbReference type="NCBI Taxonomy" id="273036"/>
    <lineage>
        <taxon>Bacteria</taxon>
        <taxon>Bacillati</taxon>
        <taxon>Bacillota</taxon>
        <taxon>Bacilli</taxon>
        <taxon>Bacillales</taxon>
        <taxon>Staphylococcaceae</taxon>
        <taxon>Staphylococcus</taxon>
    </lineage>
</organism>
<evidence type="ECO:0000250" key="1"/>
<evidence type="ECO:0000255" key="2"/>
<evidence type="ECO:0000256" key="3">
    <source>
        <dbReference type="SAM" id="MobiDB-lite"/>
    </source>
</evidence>
<evidence type="ECO:0000305" key="4"/>